<proteinExistence type="inferred from homology"/>
<name>AROB_XANAC</name>
<dbReference type="EC" id="4.2.3.4" evidence="1"/>
<dbReference type="EMBL" id="AE008923">
    <property type="protein sequence ID" value="AAM37856.1"/>
    <property type="molecule type" value="Genomic_DNA"/>
</dbReference>
<dbReference type="RefSeq" id="WP_011051973.1">
    <property type="nucleotide sequence ID" value="NC_003919.1"/>
</dbReference>
<dbReference type="SMR" id="Q8PI87"/>
<dbReference type="GeneID" id="66912086"/>
<dbReference type="KEGG" id="xac:XAC3011"/>
<dbReference type="eggNOG" id="COG0337">
    <property type="taxonomic scope" value="Bacteria"/>
</dbReference>
<dbReference type="HOGENOM" id="CLU_001201_0_2_6"/>
<dbReference type="UniPathway" id="UPA00053">
    <property type="reaction ID" value="UER00085"/>
</dbReference>
<dbReference type="Proteomes" id="UP000000576">
    <property type="component" value="Chromosome"/>
</dbReference>
<dbReference type="GO" id="GO:0005737">
    <property type="term" value="C:cytoplasm"/>
    <property type="evidence" value="ECO:0007669"/>
    <property type="project" value="UniProtKB-SubCell"/>
</dbReference>
<dbReference type="GO" id="GO:0003856">
    <property type="term" value="F:3-dehydroquinate synthase activity"/>
    <property type="evidence" value="ECO:0007669"/>
    <property type="project" value="UniProtKB-UniRule"/>
</dbReference>
<dbReference type="GO" id="GO:0046872">
    <property type="term" value="F:metal ion binding"/>
    <property type="evidence" value="ECO:0007669"/>
    <property type="project" value="UniProtKB-KW"/>
</dbReference>
<dbReference type="GO" id="GO:0000166">
    <property type="term" value="F:nucleotide binding"/>
    <property type="evidence" value="ECO:0007669"/>
    <property type="project" value="UniProtKB-KW"/>
</dbReference>
<dbReference type="GO" id="GO:0008652">
    <property type="term" value="P:amino acid biosynthetic process"/>
    <property type="evidence" value="ECO:0007669"/>
    <property type="project" value="UniProtKB-KW"/>
</dbReference>
<dbReference type="GO" id="GO:0009073">
    <property type="term" value="P:aromatic amino acid family biosynthetic process"/>
    <property type="evidence" value="ECO:0007669"/>
    <property type="project" value="UniProtKB-KW"/>
</dbReference>
<dbReference type="GO" id="GO:0009423">
    <property type="term" value="P:chorismate biosynthetic process"/>
    <property type="evidence" value="ECO:0007669"/>
    <property type="project" value="UniProtKB-UniRule"/>
</dbReference>
<dbReference type="CDD" id="cd08195">
    <property type="entry name" value="DHQS"/>
    <property type="match status" value="1"/>
</dbReference>
<dbReference type="FunFam" id="3.40.50.1970:FF:000023">
    <property type="entry name" value="3-dehydroquinate synthase"/>
    <property type="match status" value="1"/>
</dbReference>
<dbReference type="Gene3D" id="3.40.50.1970">
    <property type="match status" value="1"/>
</dbReference>
<dbReference type="Gene3D" id="1.20.1090.10">
    <property type="entry name" value="Dehydroquinate synthase-like - alpha domain"/>
    <property type="match status" value="1"/>
</dbReference>
<dbReference type="HAMAP" id="MF_00110">
    <property type="entry name" value="DHQ_synthase"/>
    <property type="match status" value="1"/>
</dbReference>
<dbReference type="InterPro" id="IPR050071">
    <property type="entry name" value="Dehydroquinate_synthase"/>
</dbReference>
<dbReference type="InterPro" id="IPR016037">
    <property type="entry name" value="DHQ_synth_AroB"/>
</dbReference>
<dbReference type="InterPro" id="IPR030963">
    <property type="entry name" value="DHQ_synth_fam"/>
</dbReference>
<dbReference type="InterPro" id="IPR030960">
    <property type="entry name" value="DHQS/DOIS_N"/>
</dbReference>
<dbReference type="InterPro" id="IPR056179">
    <property type="entry name" value="DHQS_C"/>
</dbReference>
<dbReference type="NCBIfam" id="TIGR01357">
    <property type="entry name" value="aroB"/>
    <property type="match status" value="1"/>
</dbReference>
<dbReference type="PANTHER" id="PTHR43622">
    <property type="entry name" value="3-DEHYDROQUINATE SYNTHASE"/>
    <property type="match status" value="1"/>
</dbReference>
<dbReference type="PANTHER" id="PTHR43622:SF7">
    <property type="entry name" value="3-DEHYDROQUINATE SYNTHASE, CHLOROPLASTIC"/>
    <property type="match status" value="1"/>
</dbReference>
<dbReference type="Pfam" id="PF01761">
    <property type="entry name" value="DHQ_synthase"/>
    <property type="match status" value="1"/>
</dbReference>
<dbReference type="Pfam" id="PF24621">
    <property type="entry name" value="DHQS_C"/>
    <property type="match status" value="1"/>
</dbReference>
<dbReference type="PIRSF" id="PIRSF001455">
    <property type="entry name" value="DHQ_synth"/>
    <property type="match status" value="1"/>
</dbReference>
<dbReference type="SUPFAM" id="SSF56796">
    <property type="entry name" value="Dehydroquinate synthase-like"/>
    <property type="match status" value="1"/>
</dbReference>
<comment type="function">
    <text evidence="1">Catalyzes the conversion of 3-deoxy-D-arabino-heptulosonate 7-phosphate (DAHP) to dehydroquinate (DHQ).</text>
</comment>
<comment type="catalytic activity">
    <reaction evidence="1">
        <text>7-phospho-2-dehydro-3-deoxy-D-arabino-heptonate = 3-dehydroquinate + phosphate</text>
        <dbReference type="Rhea" id="RHEA:21968"/>
        <dbReference type="ChEBI" id="CHEBI:32364"/>
        <dbReference type="ChEBI" id="CHEBI:43474"/>
        <dbReference type="ChEBI" id="CHEBI:58394"/>
        <dbReference type="EC" id="4.2.3.4"/>
    </reaction>
</comment>
<comment type="cofactor">
    <cofactor evidence="1">
        <name>NAD(+)</name>
        <dbReference type="ChEBI" id="CHEBI:57540"/>
    </cofactor>
</comment>
<comment type="cofactor">
    <cofactor evidence="1">
        <name>Co(2+)</name>
        <dbReference type="ChEBI" id="CHEBI:48828"/>
    </cofactor>
    <cofactor evidence="1">
        <name>Zn(2+)</name>
        <dbReference type="ChEBI" id="CHEBI:29105"/>
    </cofactor>
    <text evidence="1">Binds 1 divalent metal cation per subunit. Can use either Co(2+) or Zn(2+).</text>
</comment>
<comment type="pathway">
    <text evidence="1">Metabolic intermediate biosynthesis; chorismate biosynthesis; chorismate from D-erythrose 4-phosphate and phosphoenolpyruvate: step 2/7.</text>
</comment>
<comment type="subcellular location">
    <subcellularLocation>
        <location evidence="1">Cytoplasm</location>
    </subcellularLocation>
</comment>
<comment type="similarity">
    <text evidence="1">Belongs to the sugar phosphate cyclases superfamily. Dehydroquinate synthase family.</text>
</comment>
<feature type="chain" id="PRO_0000140809" description="3-dehydroquinate synthase">
    <location>
        <begin position="1"/>
        <end position="370"/>
    </location>
</feature>
<feature type="binding site" evidence="1">
    <location>
        <begin position="112"/>
        <end position="116"/>
    </location>
    <ligand>
        <name>NAD(+)</name>
        <dbReference type="ChEBI" id="CHEBI:57540"/>
    </ligand>
</feature>
<feature type="binding site" evidence="1">
    <location>
        <begin position="136"/>
        <end position="137"/>
    </location>
    <ligand>
        <name>NAD(+)</name>
        <dbReference type="ChEBI" id="CHEBI:57540"/>
    </ligand>
</feature>
<feature type="binding site" evidence="1">
    <location>
        <position position="149"/>
    </location>
    <ligand>
        <name>NAD(+)</name>
        <dbReference type="ChEBI" id="CHEBI:57540"/>
    </ligand>
</feature>
<feature type="binding site" evidence="1">
    <location>
        <position position="158"/>
    </location>
    <ligand>
        <name>NAD(+)</name>
        <dbReference type="ChEBI" id="CHEBI:57540"/>
    </ligand>
</feature>
<feature type="binding site" evidence="1">
    <location>
        <begin position="176"/>
        <end position="179"/>
    </location>
    <ligand>
        <name>NAD(+)</name>
        <dbReference type="ChEBI" id="CHEBI:57540"/>
    </ligand>
</feature>
<feature type="binding site" evidence="1">
    <location>
        <position position="191"/>
    </location>
    <ligand>
        <name>Zn(2+)</name>
        <dbReference type="ChEBI" id="CHEBI:29105"/>
    </ligand>
</feature>
<feature type="binding site" evidence="1">
    <location>
        <position position="254"/>
    </location>
    <ligand>
        <name>Zn(2+)</name>
        <dbReference type="ChEBI" id="CHEBI:29105"/>
    </ligand>
</feature>
<feature type="binding site" evidence="1">
    <location>
        <position position="276"/>
    </location>
    <ligand>
        <name>Zn(2+)</name>
        <dbReference type="ChEBI" id="CHEBI:29105"/>
    </ligand>
</feature>
<organism>
    <name type="scientific">Xanthomonas axonopodis pv. citri (strain 306)</name>
    <dbReference type="NCBI Taxonomy" id="190486"/>
    <lineage>
        <taxon>Bacteria</taxon>
        <taxon>Pseudomonadati</taxon>
        <taxon>Pseudomonadota</taxon>
        <taxon>Gammaproteobacteria</taxon>
        <taxon>Lysobacterales</taxon>
        <taxon>Lysobacteraceae</taxon>
        <taxon>Xanthomonas</taxon>
    </lineage>
</organism>
<keyword id="KW-0028">Amino-acid biosynthesis</keyword>
<keyword id="KW-0057">Aromatic amino acid biosynthesis</keyword>
<keyword id="KW-0170">Cobalt</keyword>
<keyword id="KW-0963">Cytoplasm</keyword>
<keyword id="KW-0456">Lyase</keyword>
<keyword id="KW-0479">Metal-binding</keyword>
<keyword id="KW-0520">NAD</keyword>
<keyword id="KW-0547">Nucleotide-binding</keyword>
<keyword id="KW-0862">Zinc</keyword>
<gene>
    <name evidence="1" type="primary">aroB</name>
    <name type="ordered locus">XAC3011</name>
</gene>
<reference key="1">
    <citation type="journal article" date="2002" name="Nature">
        <title>Comparison of the genomes of two Xanthomonas pathogens with differing host specificities.</title>
        <authorList>
            <person name="da Silva A.C.R."/>
            <person name="Ferro J.A."/>
            <person name="Reinach F.C."/>
            <person name="Farah C.S."/>
            <person name="Furlan L.R."/>
            <person name="Quaggio R.B."/>
            <person name="Monteiro-Vitorello C.B."/>
            <person name="Van Sluys M.A."/>
            <person name="Almeida N.F. Jr."/>
            <person name="Alves L.M.C."/>
            <person name="do Amaral A.M."/>
            <person name="Bertolini M.C."/>
            <person name="Camargo L.E.A."/>
            <person name="Camarotte G."/>
            <person name="Cannavan F."/>
            <person name="Cardozo J."/>
            <person name="Chambergo F."/>
            <person name="Ciapina L.P."/>
            <person name="Cicarelli R.M.B."/>
            <person name="Coutinho L.L."/>
            <person name="Cursino-Santos J.R."/>
            <person name="El-Dorry H."/>
            <person name="Faria J.B."/>
            <person name="Ferreira A.J.S."/>
            <person name="Ferreira R.C.C."/>
            <person name="Ferro M.I.T."/>
            <person name="Formighieri E.F."/>
            <person name="Franco M.C."/>
            <person name="Greggio C.C."/>
            <person name="Gruber A."/>
            <person name="Katsuyama A.M."/>
            <person name="Kishi L.T."/>
            <person name="Leite R.P."/>
            <person name="Lemos E.G.M."/>
            <person name="Lemos M.V.F."/>
            <person name="Locali E.C."/>
            <person name="Machado M.A."/>
            <person name="Madeira A.M.B.N."/>
            <person name="Martinez-Rossi N.M."/>
            <person name="Martins E.C."/>
            <person name="Meidanis J."/>
            <person name="Menck C.F.M."/>
            <person name="Miyaki C.Y."/>
            <person name="Moon D.H."/>
            <person name="Moreira L.M."/>
            <person name="Novo M.T.M."/>
            <person name="Okura V.K."/>
            <person name="Oliveira M.C."/>
            <person name="Oliveira V.R."/>
            <person name="Pereira H.A."/>
            <person name="Rossi A."/>
            <person name="Sena J.A.D."/>
            <person name="Silva C."/>
            <person name="de Souza R.F."/>
            <person name="Spinola L.A.F."/>
            <person name="Takita M.A."/>
            <person name="Tamura R.E."/>
            <person name="Teixeira E.C."/>
            <person name="Tezza R.I.D."/>
            <person name="Trindade dos Santos M."/>
            <person name="Truffi D."/>
            <person name="Tsai S.M."/>
            <person name="White F.F."/>
            <person name="Setubal J.C."/>
            <person name="Kitajima J.P."/>
        </authorList>
    </citation>
    <scope>NUCLEOTIDE SEQUENCE [LARGE SCALE GENOMIC DNA]</scope>
    <source>
        <strain>306</strain>
    </source>
</reference>
<protein>
    <recommendedName>
        <fullName evidence="1">3-dehydroquinate synthase</fullName>
        <shortName evidence="1">DHQS</shortName>
        <ecNumber evidence="1">4.2.3.4</ecNumber>
    </recommendedName>
</protein>
<evidence type="ECO:0000255" key="1">
    <source>
        <dbReference type="HAMAP-Rule" id="MF_00110"/>
    </source>
</evidence>
<accession>Q8PI87</accession>
<sequence length="370" mass="38816">MTLSRSSRSVDVDGAQPYTITIAPGLLADGARLASHVRGRHALLLSDSQVAPHYAAGVRAALSRARPDLQVGELVIAAGEASKTLETFGSAITALAELGATRDACVFALGGGVVGDLAGFAAACWMRGVDCVQLPTSLLAMVDSSVGGKTAVDIPQGKNLVGAFHPPRAVIADTDTLRTLPARELRAGLAEVIKYGAIRDPLFFQWLHAERRALLDGDAAALAQAIARSCEHKAEIVARDPLEKGERALLNLGHTFGHAIETEQGYGAPGNDNLNHGEAVAVGMVLAARLSAALGMSDVQDTETLRALLHDFDLPTEIPPGLTPQALLARMRLDKKNIAGRLRLVLWRGIGKAEVVPDVEEAAVLEILAG</sequence>